<comment type="function">
    <text evidence="1">Acts as a ribosome collision sensor. Detects stalled/collided disomes (pairs of ribosomes where the leading ribosome is stalled and a second ribosome has collided with it) and endonucleolytically cleaves mRNA at the 5' boundary of the stalled ribosome. Stalled/collided disomes form a new interface (primarily via the 30S subunits) that binds SmrB. Cleaved mRNA becomes available for tmRNA ligation, leading to ribosomal subunit dissociation and rescue of stalled ribosomes.</text>
</comment>
<comment type="subunit">
    <text evidence="1">Associates with collided ribosomes, but not with correctly translating polysomes.</text>
</comment>
<comment type="similarity">
    <text evidence="1">Belongs to the SmrB family.</text>
</comment>
<keyword id="KW-0255">Endonuclease</keyword>
<keyword id="KW-0378">Hydrolase</keyword>
<keyword id="KW-0540">Nuclease</keyword>
<keyword id="KW-1185">Reference proteome</keyword>
<keyword id="KW-0694">RNA-binding</keyword>
<keyword id="KW-0699">rRNA-binding</keyword>
<protein>
    <recommendedName>
        <fullName evidence="1">Ribosome rescue factor SmrB</fullName>
        <ecNumber evidence="1">3.1.-.-</ecNumber>
    </recommendedName>
</protein>
<accession>P57199</accession>
<reference key="1">
    <citation type="journal article" date="2000" name="Nature">
        <title>Genome sequence of the endocellular bacterial symbiont of aphids Buchnera sp. APS.</title>
        <authorList>
            <person name="Shigenobu S."/>
            <person name="Watanabe H."/>
            <person name="Hattori M."/>
            <person name="Sakaki Y."/>
            <person name="Ishikawa H."/>
        </authorList>
    </citation>
    <scope>NUCLEOTIDE SEQUENCE [LARGE SCALE GENOMIC DNA]</scope>
    <source>
        <strain>APS</strain>
    </source>
</reference>
<proteinExistence type="inferred from homology"/>
<evidence type="ECO:0000255" key="1">
    <source>
        <dbReference type="HAMAP-Rule" id="MF_01042"/>
    </source>
</evidence>
<name>SMRB_BUCAI</name>
<feature type="chain" id="PRO_0000214548" description="Ribosome rescue factor SmrB">
    <location>
        <begin position="1"/>
        <end position="186"/>
    </location>
</feature>
<feature type="domain" description="Smr" evidence="1">
    <location>
        <begin position="99"/>
        <end position="174"/>
    </location>
</feature>
<dbReference type="EC" id="3.1.-.-" evidence="1"/>
<dbReference type="EMBL" id="BA000003">
    <property type="protein sequence ID" value="BAB12817.1"/>
    <property type="molecule type" value="Genomic_DNA"/>
</dbReference>
<dbReference type="RefSeq" id="NP_239931.1">
    <property type="nucleotide sequence ID" value="NC_002528.1"/>
</dbReference>
<dbReference type="RefSeq" id="WP_009874053.1">
    <property type="nucleotide sequence ID" value="NC_002528.1"/>
</dbReference>
<dbReference type="SMR" id="P57199"/>
<dbReference type="STRING" id="563178.BUAP5A_096"/>
<dbReference type="EnsemblBacteria" id="BAB12817">
    <property type="protein sequence ID" value="BAB12817"/>
    <property type="gene ID" value="BAB12817"/>
</dbReference>
<dbReference type="KEGG" id="buc:BU098"/>
<dbReference type="PATRIC" id="fig|107806.10.peg.106"/>
<dbReference type="eggNOG" id="COG2840">
    <property type="taxonomic scope" value="Bacteria"/>
</dbReference>
<dbReference type="HOGENOM" id="CLU_055978_4_0_6"/>
<dbReference type="BioCyc" id="BAPH107806:GBZJ-97-MONOMER"/>
<dbReference type="Proteomes" id="UP000001806">
    <property type="component" value="Chromosome"/>
</dbReference>
<dbReference type="GO" id="GO:0004521">
    <property type="term" value="F:RNA endonuclease activity"/>
    <property type="evidence" value="ECO:0007669"/>
    <property type="project" value="UniProtKB-UniRule"/>
</dbReference>
<dbReference type="GO" id="GO:0019843">
    <property type="term" value="F:rRNA binding"/>
    <property type="evidence" value="ECO:0007669"/>
    <property type="project" value="UniProtKB-UniRule"/>
</dbReference>
<dbReference type="GO" id="GO:0072344">
    <property type="term" value="P:rescue of stalled ribosome"/>
    <property type="evidence" value="ECO:0007669"/>
    <property type="project" value="UniProtKB-UniRule"/>
</dbReference>
<dbReference type="Gene3D" id="3.30.1370.110">
    <property type="match status" value="1"/>
</dbReference>
<dbReference type="HAMAP" id="MF_01042">
    <property type="entry name" value="SmrB"/>
    <property type="match status" value="1"/>
</dbReference>
<dbReference type="InterPro" id="IPR002625">
    <property type="entry name" value="Smr_dom"/>
</dbReference>
<dbReference type="InterPro" id="IPR036063">
    <property type="entry name" value="Smr_dom_sf"/>
</dbReference>
<dbReference type="InterPro" id="IPR022990">
    <property type="entry name" value="SmrB-like"/>
</dbReference>
<dbReference type="NCBIfam" id="NF003432">
    <property type="entry name" value="PRK04946.1"/>
    <property type="match status" value="1"/>
</dbReference>
<dbReference type="PANTHER" id="PTHR35562">
    <property type="entry name" value="DNA ENDONUCLEASE SMRA-RELATED"/>
    <property type="match status" value="1"/>
</dbReference>
<dbReference type="PANTHER" id="PTHR35562:SF1">
    <property type="entry name" value="UPF0115 PROTEIN YFCN"/>
    <property type="match status" value="1"/>
</dbReference>
<dbReference type="Pfam" id="PF01713">
    <property type="entry name" value="Smr"/>
    <property type="match status" value="1"/>
</dbReference>
<dbReference type="SMART" id="SM00463">
    <property type="entry name" value="SMR"/>
    <property type="match status" value="1"/>
</dbReference>
<dbReference type="SUPFAM" id="SSF160443">
    <property type="entry name" value="SMR domain-like"/>
    <property type="match status" value="1"/>
</dbReference>
<dbReference type="PROSITE" id="PS50828">
    <property type="entry name" value="SMR"/>
    <property type="match status" value="1"/>
</dbReference>
<sequence length="186" mass="21897">MDKNSRYTVDSSILFRQWLNDTREMVQDTIFHSRIQKKNNNHPVSQRVFFEQNAHSHYFSYRNNKNLFKENPVSYIRHQSLYNVLKNLKKGRYNPDISIDLHGLTQHQAQQALGELITTCQKEKIFCAHIMHGHGKHILKKQTPFWLSQHPDIIAFHEAPKFFGSDAAIIVIIEINSLKKNINIFN</sequence>
<organism>
    <name type="scientific">Buchnera aphidicola subsp. Acyrthosiphon pisum (strain APS)</name>
    <name type="common">Acyrthosiphon pisum symbiotic bacterium</name>
    <dbReference type="NCBI Taxonomy" id="107806"/>
    <lineage>
        <taxon>Bacteria</taxon>
        <taxon>Pseudomonadati</taxon>
        <taxon>Pseudomonadota</taxon>
        <taxon>Gammaproteobacteria</taxon>
        <taxon>Enterobacterales</taxon>
        <taxon>Erwiniaceae</taxon>
        <taxon>Buchnera</taxon>
    </lineage>
</organism>
<gene>
    <name evidence="1" type="primary">smrB</name>
    <name type="ordered locus">BU098</name>
</gene>